<gene>
    <name type="ordered locus">Rv0738</name>
</gene>
<feature type="chain" id="PRO_0000403672" description="Uncharacterized protein Rv0738">
    <location>
        <begin position="1"/>
        <end position="182"/>
    </location>
</feature>
<feature type="region of interest" description="Disordered" evidence="1">
    <location>
        <begin position="151"/>
        <end position="172"/>
    </location>
</feature>
<feature type="compositionally biased region" description="Basic and acidic residues" evidence="1">
    <location>
        <begin position="157"/>
        <end position="169"/>
    </location>
</feature>
<protein>
    <recommendedName>
        <fullName>Uncharacterized protein Rv0738</fullName>
    </recommendedName>
</protein>
<accession>P9WKS3</accession>
<accession>L0T7C5</accession>
<accession>O53801</accession>
<accession>Q7D9D1</accession>
<evidence type="ECO:0000256" key="1">
    <source>
        <dbReference type="SAM" id="MobiDB-lite"/>
    </source>
</evidence>
<name>Y738_MYCTU</name>
<sequence>MDPLMAHQRAQDAFAALLANVRADQLGGPTPCSEWTINDLIEHVVGGNEQVGRWAASPIEPPARPDGLVAAHQAAAAVAHEIFAAPGGMSATFKLPLGEVPGQVFIGLRTTDVLTHAWDLAAATGQSTDLDPELAVERLAAARALVGPQFRGPGKPFADEKPCPRERPPADQLAAFLGRTVR</sequence>
<keyword id="KW-1185">Reference proteome</keyword>
<proteinExistence type="evidence at protein level"/>
<organism>
    <name type="scientific">Mycobacterium tuberculosis (strain ATCC 25618 / H37Rv)</name>
    <dbReference type="NCBI Taxonomy" id="83332"/>
    <lineage>
        <taxon>Bacteria</taxon>
        <taxon>Bacillati</taxon>
        <taxon>Actinomycetota</taxon>
        <taxon>Actinomycetes</taxon>
        <taxon>Mycobacteriales</taxon>
        <taxon>Mycobacteriaceae</taxon>
        <taxon>Mycobacterium</taxon>
        <taxon>Mycobacterium tuberculosis complex</taxon>
    </lineage>
</organism>
<dbReference type="EMBL" id="AL123456">
    <property type="protein sequence ID" value="CCP43483.1"/>
    <property type="molecule type" value="Genomic_DNA"/>
</dbReference>
<dbReference type="PIR" id="E70823">
    <property type="entry name" value="E70823"/>
</dbReference>
<dbReference type="RefSeq" id="NP_215252.1">
    <property type="nucleotide sequence ID" value="NC_000962.3"/>
</dbReference>
<dbReference type="RefSeq" id="WP_003403741.1">
    <property type="nucleotide sequence ID" value="NZ_NVQJ01000007.1"/>
</dbReference>
<dbReference type="SMR" id="P9WKS3"/>
<dbReference type="STRING" id="83332.Rv0738"/>
<dbReference type="PaxDb" id="83332-Rv0738"/>
<dbReference type="DNASU" id="888620"/>
<dbReference type="GeneID" id="888620"/>
<dbReference type="KEGG" id="mtu:Rv0738"/>
<dbReference type="KEGG" id="mtv:RVBD_0738"/>
<dbReference type="TubercuList" id="Rv0738"/>
<dbReference type="eggNOG" id="COG1576">
    <property type="taxonomic scope" value="Bacteria"/>
</dbReference>
<dbReference type="InParanoid" id="P9WKS3"/>
<dbReference type="OrthoDB" id="5185819at2"/>
<dbReference type="PhylomeDB" id="P9WKS3"/>
<dbReference type="Proteomes" id="UP000001584">
    <property type="component" value="Chromosome"/>
</dbReference>
<dbReference type="GO" id="GO:0046872">
    <property type="term" value="F:metal ion binding"/>
    <property type="evidence" value="ECO:0007669"/>
    <property type="project" value="InterPro"/>
</dbReference>
<dbReference type="Gene3D" id="1.20.120.450">
    <property type="entry name" value="dinb family like domain"/>
    <property type="match status" value="1"/>
</dbReference>
<dbReference type="InterPro" id="IPR017520">
    <property type="entry name" value="CHP03086"/>
</dbReference>
<dbReference type="InterPro" id="IPR034660">
    <property type="entry name" value="DinB/YfiT-like"/>
</dbReference>
<dbReference type="InterPro" id="IPR017517">
    <property type="entry name" value="Maleyloyr_isom"/>
</dbReference>
<dbReference type="InterPro" id="IPR024344">
    <property type="entry name" value="MDMPI_metal-binding"/>
</dbReference>
<dbReference type="NCBIfam" id="TIGR03083">
    <property type="entry name" value="maleylpyruvate isomerase family mycothiol-dependent enzyme"/>
    <property type="match status" value="1"/>
</dbReference>
<dbReference type="NCBIfam" id="TIGR03086">
    <property type="entry name" value="TIGR03086 family metal-binding protein"/>
    <property type="match status" value="1"/>
</dbReference>
<dbReference type="Pfam" id="PF11716">
    <property type="entry name" value="MDMPI_N"/>
    <property type="match status" value="1"/>
</dbReference>
<dbReference type="SUPFAM" id="SSF109854">
    <property type="entry name" value="DinB/YfiT-like putative metalloenzymes"/>
    <property type="match status" value="1"/>
</dbReference>
<reference key="1">
    <citation type="journal article" date="1998" name="Nature">
        <title>Deciphering the biology of Mycobacterium tuberculosis from the complete genome sequence.</title>
        <authorList>
            <person name="Cole S.T."/>
            <person name="Brosch R."/>
            <person name="Parkhill J."/>
            <person name="Garnier T."/>
            <person name="Churcher C.M."/>
            <person name="Harris D.E."/>
            <person name="Gordon S.V."/>
            <person name="Eiglmeier K."/>
            <person name="Gas S."/>
            <person name="Barry C.E. III"/>
            <person name="Tekaia F."/>
            <person name="Badcock K."/>
            <person name="Basham D."/>
            <person name="Brown D."/>
            <person name="Chillingworth T."/>
            <person name="Connor R."/>
            <person name="Davies R.M."/>
            <person name="Devlin K."/>
            <person name="Feltwell T."/>
            <person name="Gentles S."/>
            <person name="Hamlin N."/>
            <person name="Holroyd S."/>
            <person name="Hornsby T."/>
            <person name="Jagels K."/>
            <person name="Krogh A."/>
            <person name="McLean J."/>
            <person name="Moule S."/>
            <person name="Murphy L.D."/>
            <person name="Oliver S."/>
            <person name="Osborne J."/>
            <person name="Quail M.A."/>
            <person name="Rajandream M.A."/>
            <person name="Rogers J."/>
            <person name="Rutter S."/>
            <person name="Seeger K."/>
            <person name="Skelton S."/>
            <person name="Squares S."/>
            <person name="Squares R."/>
            <person name="Sulston J.E."/>
            <person name="Taylor K."/>
            <person name="Whitehead S."/>
            <person name="Barrell B.G."/>
        </authorList>
    </citation>
    <scope>NUCLEOTIDE SEQUENCE [LARGE SCALE GENOMIC DNA]</scope>
    <source>
        <strain>ATCC 25618 / H37Rv</strain>
    </source>
</reference>
<reference key="2">
    <citation type="journal article" date="2007" name="Microbiology">
        <title>Experimental determination of translational starts using peptide mass mapping and tandem mass spectrometry within the proteome of Mycobacterium tuberculosis.</title>
        <authorList>
            <person name="Rison S.C."/>
            <person name="Mattow J."/>
            <person name="Jungblut P.R."/>
            <person name="Stoker N.G."/>
        </authorList>
    </citation>
    <scope>IDENTIFICATION BY MASS SPECTROMETRY</scope>
    <scope>DETERMINATION OF TRANSLATIONAL START SITE</scope>
    <source>
        <strain>ATCC 25618 / H37Rv</strain>
    </source>
</reference>
<reference key="3">
    <citation type="journal article" date="2011" name="Mol. Cell. Proteomics">
        <title>Proteogenomic analysis of Mycobacterium tuberculosis by high resolution mass spectrometry.</title>
        <authorList>
            <person name="Kelkar D.S."/>
            <person name="Kumar D."/>
            <person name="Kumar P."/>
            <person name="Balakrishnan L."/>
            <person name="Muthusamy B."/>
            <person name="Yadav A.K."/>
            <person name="Shrivastava P."/>
            <person name="Marimuthu A."/>
            <person name="Anand S."/>
            <person name="Sundaram H."/>
            <person name="Kingsbury R."/>
            <person name="Harsha H.C."/>
            <person name="Nair B."/>
            <person name="Prasad T.S."/>
            <person name="Chauhan D.S."/>
            <person name="Katoch K."/>
            <person name="Katoch V.M."/>
            <person name="Kumar P."/>
            <person name="Chaerkady R."/>
            <person name="Ramachandran S."/>
            <person name="Dash D."/>
            <person name="Pandey A."/>
        </authorList>
    </citation>
    <scope>IDENTIFICATION BY MASS SPECTROMETRY [LARGE SCALE ANALYSIS]</scope>
    <source>
        <strain>ATCC 25618 / H37Rv</strain>
    </source>
</reference>